<dbReference type="EMBL" id="AY598326">
    <property type="protein sequence ID" value="AAT06737.1"/>
    <property type="molecule type" value="mRNA"/>
</dbReference>
<dbReference type="EMBL" id="AF379629">
    <property type="protein sequence ID" value="AAO15397.1"/>
    <property type="molecule type" value="mRNA"/>
</dbReference>
<dbReference type="EMBL" id="AY894564">
    <property type="protein sequence ID" value="AAX85103.1"/>
    <property type="molecule type" value="mRNA"/>
</dbReference>
<dbReference type="EMBL" id="AK292580">
    <property type="protein sequence ID" value="BAF85269.1"/>
    <property type="molecule type" value="mRNA"/>
</dbReference>
<dbReference type="EMBL" id="AK299840">
    <property type="protein sequence ID" value="BAG61704.1"/>
    <property type="molecule type" value="mRNA"/>
</dbReference>
<dbReference type="EMBL" id="AL136890">
    <property type="protein sequence ID" value="CAB66824.1"/>
    <property type="molecule type" value="mRNA"/>
</dbReference>
<dbReference type="EMBL" id="AL834330">
    <property type="protein sequence ID" value="CAD38998.2"/>
    <property type="molecule type" value="mRNA"/>
</dbReference>
<dbReference type="EMBL" id="AL592309">
    <property type="status" value="NOT_ANNOTATED_CDS"/>
    <property type="molecule type" value="Genomic_DNA"/>
</dbReference>
<dbReference type="EMBL" id="BC024011">
    <property type="protein sequence ID" value="AAH24011.1"/>
    <property type="status" value="ALT_FRAME"/>
    <property type="molecule type" value="mRNA"/>
</dbReference>
<dbReference type="CCDS" id="CCDS216.1">
    <molecule id="Q9H094-1"/>
</dbReference>
<dbReference type="CCDS" id="CCDS57976.1">
    <molecule id="Q9H094-3"/>
</dbReference>
<dbReference type="CCDS" id="CCDS57977.1">
    <molecule id="Q9H094-5"/>
</dbReference>
<dbReference type="CCDS" id="CCDS81275.1">
    <molecule id="Q9H094-2"/>
</dbReference>
<dbReference type="RefSeq" id="NP_001243345.1">
    <molecule id="Q9H094-3"/>
    <property type="nucleotide sequence ID" value="NM_001256416.4"/>
</dbReference>
<dbReference type="RefSeq" id="NP_001243346.1">
    <molecule id="Q9H094-5"/>
    <property type="nucleotide sequence ID" value="NM_001256417.4"/>
</dbReference>
<dbReference type="RefSeq" id="NP_001317310.1">
    <molecule id="Q9H094-2"/>
    <property type="nucleotide sequence ID" value="NM_001330381.3"/>
</dbReference>
<dbReference type="RefSeq" id="NP_001364420.1">
    <molecule id="Q9H094-2"/>
    <property type="nucleotide sequence ID" value="NM_001377491.1"/>
</dbReference>
<dbReference type="RefSeq" id="NP_001364421.1">
    <molecule id="Q9H094-2"/>
    <property type="nucleotide sequence ID" value="NM_001377492.1"/>
</dbReference>
<dbReference type="RefSeq" id="NP_001364422.1">
    <molecule id="Q9H094-2"/>
    <property type="nucleotide sequence ID" value="NM_001377493.1"/>
</dbReference>
<dbReference type="RefSeq" id="NP_001364423.1">
    <molecule id="Q9H094-2"/>
    <property type="nucleotide sequence ID" value="NM_001377494.1"/>
</dbReference>
<dbReference type="RefSeq" id="NP_001364424.1">
    <molecule id="Q9H094-2"/>
    <property type="nucleotide sequence ID" value="NM_001377495.1"/>
</dbReference>
<dbReference type="RefSeq" id="NP_115640.1">
    <molecule id="Q9H094-1"/>
    <property type="nucleotide sequence ID" value="NM_032264.6"/>
</dbReference>
<dbReference type="RefSeq" id="XP_006711021.1">
    <property type="nucleotide sequence ID" value="XM_006710958.1"/>
</dbReference>
<dbReference type="RefSeq" id="XP_006711022.1">
    <property type="nucleotide sequence ID" value="XM_006710959.2"/>
</dbReference>
<dbReference type="RefSeq" id="XP_011540578.1">
    <property type="nucleotide sequence ID" value="XM_011542276.1"/>
</dbReference>
<dbReference type="RefSeq" id="XP_011540579.1">
    <property type="nucleotide sequence ID" value="XM_011542277.1"/>
</dbReference>
<dbReference type="RefSeq" id="XP_011540580.1">
    <property type="nucleotide sequence ID" value="XM_011542278.1"/>
</dbReference>
<dbReference type="RefSeq" id="XP_011540583.1">
    <property type="nucleotide sequence ID" value="XM_011542281.1"/>
</dbReference>
<dbReference type="RefSeq" id="XP_016857988.1">
    <property type="nucleotide sequence ID" value="XM_017002499.1"/>
</dbReference>
<dbReference type="RefSeq" id="XP_047287993.1">
    <molecule id="Q9H094-1"/>
    <property type="nucleotide sequence ID" value="XM_047432037.1"/>
</dbReference>
<dbReference type="RefSeq" id="XP_047287994.1">
    <molecule id="Q9H094-1"/>
    <property type="nucleotide sequence ID" value="XM_047432038.1"/>
</dbReference>
<dbReference type="SMR" id="Q9H094"/>
<dbReference type="BioGRID" id="123958">
    <property type="interactions" value="12"/>
</dbReference>
<dbReference type="FunCoup" id="Q9H094">
    <property type="interactions" value="2"/>
</dbReference>
<dbReference type="IntAct" id="Q9H094">
    <property type="interactions" value="3"/>
</dbReference>
<dbReference type="STRING" id="9606.ENSP00000316782"/>
<dbReference type="GlyGen" id="Q9H094">
    <property type="glycosylation" value="1 site"/>
</dbReference>
<dbReference type="iPTMnet" id="Q9H094"/>
<dbReference type="PhosphoSitePlus" id="Q9H094"/>
<dbReference type="BioMuta" id="NBPF3"/>
<dbReference type="DMDM" id="74733518"/>
<dbReference type="jPOST" id="Q9H094"/>
<dbReference type="MassIVE" id="Q9H094"/>
<dbReference type="PaxDb" id="9606-ENSP00000316782"/>
<dbReference type="PeptideAtlas" id="Q9H094"/>
<dbReference type="Antibodypedia" id="53841">
    <property type="antibodies" value="50 antibodies from 14 providers"/>
</dbReference>
<dbReference type="DNASU" id="84224"/>
<dbReference type="Ensembl" id="ENST00000318249.10">
    <molecule id="Q9H094-1"/>
    <property type="protein sequence ID" value="ENSP00000316782.5"/>
    <property type="gene ID" value="ENSG00000142794.19"/>
</dbReference>
<dbReference type="Ensembl" id="ENST00000342104.9">
    <molecule id="Q9H094-3"/>
    <property type="protein sequence ID" value="ENSP00000340336.5"/>
    <property type="gene ID" value="ENSG00000142794.19"/>
</dbReference>
<dbReference type="Ensembl" id="ENST00000454000.6">
    <molecule id="Q9H094-5"/>
    <property type="protein sequence ID" value="ENSP00000415711.2"/>
    <property type="gene ID" value="ENSG00000142794.19"/>
</dbReference>
<dbReference type="Ensembl" id="ENST00000619554.1">
    <molecule id="Q9H094-2"/>
    <property type="protein sequence ID" value="ENSP00000484028.1"/>
    <property type="gene ID" value="ENSG00000142794.19"/>
</dbReference>
<dbReference type="GeneID" id="84224"/>
<dbReference type="KEGG" id="hsa:84224"/>
<dbReference type="MANE-Select" id="ENST00000318249.10">
    <property type="protein sequence ID" value="ENSP00000316782.5"/>
    <property type="RefSeq nucleotide sequence ID" value="NM_032264.6"/>
    <property type="RefSeq protein sequence ID" value="NP_115640.1"/>
</dbReference>
<dbReference type="UCSC" id="uc001ber.5">
    <molecule id="Q9H094-1"/>
    <property type="organism name" value="human"/>
</dbReference>
<dbReference type="AGR" id="HGNC:25076"/>
<dbReference type="CTD" id="84224"/>
<dbReference type="DisGeNET" id="84224"/>
<dbReference type="GeneCards" id="NBPF3"/>
<dbReference type="HGNC" id="HGNC:25076">
    <property type="gene designation" value="NBPF3"/>
</dbReference>
<dbReference type="HPA" id="ENSG00000142794">
    <property type="expression patterns" value="Tissue enhanced (testis)"/>
</dbReference>
<dbReference type="MIM" id="612992">
    <property type="type" value="gene"/>
</dbReference>
<dbReference type="neXtProt" id="NX_Q9H094"/>
<dbReference type="OpenTargets" id="ENSG00000142794"/>
<dbReference type="PharmGKB" id="PA142671283"/>
<dbReference type="VEuPathDB" id="HostDB:ENSG00000142794"/>
<dbReference type="eggNOG" id="ENOG502RU1I">
    <property type="taxonomic scope" value="Eukaryota"/>
</dbReference>
<dbReference type="GeneTree" id="ENSGT00420000029746"/>
<dbReference type="HOGENOM" id="CLU_030855_0_0_1"/>
<dbReference type="InParanoid" id="Q9H094"/>
<dbReference type="OMA" id="CSENHED"/>
<dbReference type="OrthoDB" id="9484677at2759"/>
<dbReference type="PAN-GO" id="Q9H094">
    <property type="GO annotations" value="0 GO annotations based on evolutionary models"/>
</dbReference>
<dbReference type="PhylomeDB" id="Q9H094"/>
<dbReference type="TreeFam" id="TF341151"/>
<dbReference type="PathwayCommons" id="Q9H094"/>
<dbReference type="SignaLink" id="Q9H094"/>
<dbReference type="BioGRID-ORCS" id="84224">
    <property type="hits" value="324 hits in 1146 CRISPR screens"/>
</dbReference>
<dbReference type="ChiTaRS" id="NBPF3">
    <property type="organism name" value="human"/>
</dbReference>
<dbReference type="GeneWiki" id="NBPF3"/>
<dbReference type="GenomeRNAi" id="84224"/>
<dbReference type="Pharos" id="Q9H094">
    <property type="development level" value="Tdark"/>
</dbReference>
<dbReference type="PRO" id="PR:Q9H094"/>
<dbReference type="Proteomes" id="UP000005640">
    <property type="component" value="Chromosome 1"/>
</dbReference>
<dbReference type="RNAct" id="Q9H094">
    <property type="molecule type" value="protein"/>
</dbReference>
<dbReference type="Bgee" id="ENSG00000142794">
    <property type="expression patterns" value="Expressed in stromal cell of endometrium and 95 other cell types or tissues"/>
</dbReference>
<dbReference type="ExpressionAtlas" id="Q9H094">
    <property type="expression patterns" value="baseline and differential"/>
</dbReference>
<dbReference type="GO" id="GO:0005737">
    <property type="term" value="C:cytoplasm"/>
    <property type="evidence" value="ECO:0007669"/>
    <property type="project" value="UniProtKB-SubCell"/>
</dbReference>
<dbReference type="InterPro" id="IPR055306">
    <property type="entry name" value="NBPF"/>
</dbReference>
<dbReference type="InterPro" id="IPR010630">
    <property type="entry name" value="Olduvai_dom"/>
</dbReference>
<dbReference type="PANTHER" id="PTHR14199:SF45">
    <property type="entry name" value="NEUROBLASTOMA BREAKPOINT FAMILY MEMBER 3"/>
    <property type="match status" value="1"/>
</dbReference>
<dbReference type="PANTHER" id="PTHR14199">
    <property type="entry name" value="NEUROBLASTOMA BREAKPOINT FAMILY MEMBER 6-LIKE PROTEIN"/>
    <property type="match status" value="1"/>
</dbReference>
<dbReference type="Pfam" id="PF06758">
    <property type="entry name" value="Olduvai"/>
    <property type="match status" value="5"/>
</dbReference>
<dbReference type="SMART" id="SM01148">
    <property type="entry name" value="DUF1220"/>
    <property type="match status" value="5"/>
</dbReference>
<dbReference type="PROSITE" id="PS51316">
    <property type="entry name" value="ODV"/>
    <property type="match status" value="5"/>
</dbReference>
<comment type="subcellular location">
    <subcellularLocation>
        <location evidence="11">Cytoplasm</location>
    </subcellularLocation>
</comment>
<comment type="alternative products">
    <event type="alternative splicing"/>
    <isoform>
        <id>Q9H094-1</id>
        <name>1</name>
        <sequence type="displayed"/>
    </isoform>
    <isoform>
        <id>Q9H094-2</id>
        <name>2</name>
        <sequence type="described" ref="VSP_025626"/>
    </isoform>
    <isoform>
        <id>Q9H094-3</id>
        <name>3</name>
        <sequence type="described" ref="VSP_025627 VSP_025628"/>
    </isoform>
    <isoform>
        <id>Q9H094-4</id>
        <name>4</name>
        <sequence type="described" ref="VSP_025625"/>
    </isoform>
    <isoform>
        <id>Q9H094-5</id>
        <name>5</name>
        <sequence type="described" ref="VSP_044705"/>
    </isoform>
</comment>
<comment type="tissue specificity">
    <text evidence="6">Expressed in testis and fetal heart, as well as in non small cell lung carcinoma and neuroblastoma cell line.</text>
</comment>
<comment type="miscellaneous">
    <text>Encoded by one of the numerous copies of NBPF genes clustered in the p36, p12 and q21 region of the chromosome 1.</text>
</comment>
<comment type="similarity">
    <text evidence="11">Belongs to the NBPF family.</text>
</comment>
<comment type="sequence caution" evidence="11">
    <conflict type="frameshift">
        <sequence resource="EMBL-CDS" id="AAH24011"/>
    </conflict>
</comment>
<protein>
    <recommendedName>
        <fullName evidence="11">NBPF family member NBPF3</fullName>
    </recommendedName>
    <alternativeName>
        <fullName>Neuroblastoma breakpoint family member 3</fullName>
    </alternativeName>
    <alternativeName>
        <fullName>Protein AE2</fullName>
    </alternativeName>
    <alternativeName>
        <fullName>Protein SHIIIa4</fullName>
    </alternativeName>
</protein>
<accession>Q9H094</accession>
<accession>A8K965</accession>
<accession>B4DSP2</accession>
<accession>I3L0I8</accession>
<accession>Q3BBW1</accession>
<accession>Q5VTG2</accession>
<accession>Q5VTG3</accession>
<accession>Q5VTG4</accession>
<accession>Q8IX78</accession>
<accession>Q8ND86</accession>
<accession>Q8TC96</accession>
<keyword id="KW-0025">Alternative splicing</keyword>
<keyword id="KW-0175">Coiled coil</keyword>
<keyword id="KW-0963">Cytoplasm</keyword>
<keyword id="KW-1185">Reference proteome</keyword>
<keyword id="KW-0677">Repeat</keyword>
<proteinExistence type="evidence at transcript level"/>
<reference key="1">
    <citation type="journal article" date="2004" name="Oncogene">
        <title>Suppression subtractive hybridization and expression profiling identifies a unique set of genes overexpressed in non-small-cell lung cancer.</title>
        <authorList>
            <person name="Petroziello J."/>
            <person name="Yamane A."/>
            <person name="Westendorf L."/>
            <person name="Thompson M."/>
            <person name="McDonagh C."/>
            <person name="Cerveny C."/>
            <person name="Law C.-L."/>
            <person name="Wahl A."/>
            <person name="Carter P."/>
        </authorList>
    </citation>
    <scope>NUCLEOTIDE SEQUENCE [MRNA] (ISOFORM 1)</scope>
</reference>
<reference key="2">
    <citation type="journal article" date="2005" name="Mol. Biol. Evol.">
        <title>A novel gene family NBPF: intricate structure generated by gene duplications during primate evolution.</title>
        <authorList>
            <person name="Vandepoele K."/>
            <person name="Van Roy N."/>
            <person name="Staes K."/>
            <person name="Speleman F."/>
            <person name="van Roy F."/>
        </authorList>
    </citation>
    <scope>NUCLEOTIDE SEQUENCE [MRNA] (ISOFORM 2)</scope>
    <scope>TISSUE SPECIFICITY</scope>
</reference>
<reference key="3">
    <citation type="journal article" date="2001" name="Genome Res.">
        <title>Towards a catalog of human genes and proteins: sequencing and analysis of 500 novel complete protein coding human cDNAs.</title>
        <authorList>
            <person name="Wiemann S."/>
            <person name="Weil B."/>
            <person name="Wellenreuther R."/>
            <person name="Gassenhuber J."/>
            <person name="Glassl S."/>
            <person name="Ansorge W."/>
            <person name="Boecher M."/>
            <person name="Bloecker H."/>
            <person name="Bauersachs S."/>
            <person name="Blum H."/>
            <person name="Lauber J."/>
            <person name="Duesterhoeft A."/>
            <person name="Beyer A."/>
            <person name="Koehrer K."/>
            <person name="Strack N."/>
            <person name="Mewes H.-W."/>
            <person name="Ottenwaelder B."/>
            <person name="Obermaier B."/>
            <person name="Tampe J."/>
            <person name="Heubner D."/>
            <person name="Wambutt R."/>
            <person name="Korn B."/>
            <person name="Klein M."/>
            <person name="Poustka A."/>
        </authorList>
    </citation>
    <scope>NUCLEOTIDE SEQUENCE [LARGE SCALE MRNA] (ISOFORM 1)</scope>
    <source>
        <tissue>Testis</tissue>
    </source>
</reference>
<reference key="4">
    <citation type="journal article" date="2004" name="Nat. Genet.">
        <title>Complete sequencing and characterization of 21,243 full-length human cDNAs.</title>
        <authorList>
            <person name="Ota T."/>
            <person name="Suzuki Y."/>
            <person name="Nishikawa T."/>
            <person name="Otsuki T."/>
            <person name="Sugiyama T."/>
            <person name="Irie R."/>
            <person name="Wakamatsu A."/>
            <person name="Hayashi K."/>
            <person name="Sato H."/>
            <person name="Nagai K."/>
            <person name="Kimura K."/>
            <person name="Makita H."/>
            <person name="Sekine M."/>
            <person name="Obayashi M."/>
            <person name="Nishi T."/>
            <person name="Shibahara T."/>
            <person name="Tanaka T."/>
            <person name="Ishii S."/>
            <person name="Yamamoto J."/>
            <person name="Saito K."/>
            <person name="Kawai Y."/>
            <person name="Isono Y."/>
            <person name="Nakamura Y."/>
            <person name="Nagahari K."/>
            <person name="Murakami K."/>
            <person name="Yasuda T."/>
            <person name="Iwayanagi T."/>
            <person name="Wagatsuma M."/>
            <person name="Shiratori A."/>
            <person name="Sudo H."/>
            <person name="Hosoiri T."/>
            <person name="Kaku Y."/>
            <person name="Kodaira H."/>
            <person name="Kondo H."/>
            <person name="Sugawara M."/>
            <person name="Takahashi M."/>
            <person name="Kanda K."/>
            <person name="Yokoi T."/>
            <person name="Furuya T."/>
            <person name="Kikkawa E."/>
            <person name="Omura Y."/>
            <person name="Abe K."/>
            <person name="Kamihara K."/>
            <person name="Katsuta N."/>
            <person name="Sato K."/>
            <person name="Tanikawa M."/>
            <person name="Yamazaki M."/>
            <person name="Ninomiya K."/>
            <person name="Ishibashi T."/>
            <person name="Yamashita H."/>
            <person name="Murakawa K."/>
            <person name="Fujimori K."/>
            <person name="Tanai H."/>
            <person name="Kimata M."/>
            <person name="Watanabe M."/>
            <person name="Hiraoka S."/>
            <person name="Chiba Y."/>
            <person name="Ishida S."/>
            <person name="Ono Y."/>
            <person name="Takiguchi S."/>
            <person name="Watanabe S."/>
            <person name="Yosida M."/>
            <person name="Hotuta T."/>
            <person name="Kusano J."/>
            <person name="Kanehori K."/>
            <person name="Takahashi-Fujii A."/>
            <person name="Hara H."/>
            <person name="Tanase T.-O."/>
            <person name="Nomura Y."/>
            <person name="Togiya S."/>
            <person name="Komai F."/>
            <person name="Hara R."/>
            <person name="Takeuchi K."/>
            <person name="Arita M."/>
            <person name="Imose N."/>
            <person name="Musashino K."/>
            <person name="Yuuki H."/>
            <person name="Oshima A."/>
            <person name="Sasaki N."/>
            <person name="Aotsuka S."/>
            <person name="Yoshikawa Y."/>
            <person name="Matsunawa H."/>
            <person name="Ichihara T."/>
            <person name="Shiohata N."/>
            <person name="Sano S."/>
            <person name="Moriya S."/>
            <person name="Momiyama H."/>
            <person name="Satoh N."/>
            <person name="Takami S."/>
            <person name="Terashima Y."/>
            <person name="Suzuki O."/>
            <person name="Nakagawa S."/>
            <person name="Senoh A."/>
            <person name="Mizoguchi H."/>
            <person name="Goto Y."/>
            <person name="Shimizu F."/>
            <person name="Wakebe H."/>
            <person name="Hishigaki H."/>
            <person name="Watanabe T."/>
            <person name="Sugiyama A."/>
            <person name="Takemoto M."/>
            <person name="Kawakami B."/>
            <person name="Yamazaki M."/>
            <person name="Watanabe K."/>
            <person name="Kumagai A."/>
            <person name="Itakura S."/>
            <person name="Fukuzumi Y."/>
            <person name="Fujimori Y."/>
            <person name="Komiyama M."/>
            <person name="Tashiro H."/>
            <person name="Tanigami A."/>
            <person name="Fujiwara T."/>
            <person name="Ono T."/>
            <person name="Yamada K."/>
            <person name="Fujii Y."/>
            <person name="Ozaki K."/>
            <person name="Hirao M."/>
            <person name="Ohmori Y."/>
            <person name="Kawabata A."/>
            <person name="Hikiji T."/>
            <person name="Kobatake N."/>
            <person name="Inagaki H."/>
            <person name="Ikema Y."/>
            <person name="Okamoto S."/>
            <person name="Okitani R."/>
            <person name="Kawakami T."/>
            <person name="Noguchi S."/>
            <person name="Itoh T."/>
            <person name="Shigeta K."/>
            <person name="Senba T."/>
            <person name="Matsumura K."/>
            <person name="Nakajima Y."/>
            <person name="Mizuno T."/>
            <person name="Morinaga M."/>
            <person name="Sasaki M."/>
            <person name="Togashi T."/>
            <person name="Oyama M."/>
            <person name="Hata H."/>
            <person name="Watanabe M."/>
            <person name="Komatsu T."/>
            <person name="Mizushima-Sugano J."/>
            <person name="Satoh T."/>
            <person name="Shirai Y."/>
            <person name="Takahashi Y."/>
            <person name="Nakagawa K."/>
            <person name="Okumura K."/>
            <person name="Nagase T."/>
            <person name="Nomura N."/>
            <person name="Kikuchi H."/>
            <person name="Masuho Y."/>
            <person name="Yamashita R."/>
            <person name="Nakai K."/>
            <person name="Yada T."/>
            <person name="Nakamura Y."/>
            <person name="Ohara O."/>
            <person name="Isogai T."/>
            <person name="Sugano S."/>
        </authorList>
    </citation>
    <scope>NUCLEOTIDE SEQUENCE [LARGE SCALE MRNA] (ISOFORMS 1 AND 5)</scope>
    <scope>VARIANTS GLU-444 AND VAL-459</scope>
    <source>
        <tissue>Brain</tissue>
        <tissue>Testis</tissue>
    </source>
</reference>
<reference key="5">
    <citation type="journal article" date="2007" name="BMC Genomics">
        <title>The full-ORF clone resource of the German cDNA consortium.</title>
        <authorList>
            <person name="Bechtel S."/>
            <person name="Rosenfelder H."/>
            <person name="Duda A."/>
            <person name="Schmidt C.P."/>
            <person name="Ernst U."/>
            <person name="Wellenreuther R."/>
            <person name="Mehrle A."/>
            <person name="Schuster C."/>
            <person name="Bahr A."/>
            <person name="Bloecker H."/>
            <person name="Heubner D."/>
            <person name="Hoerlein A."/>
            <person name="Michel G."/>
            <person name="Wedler H."/>
            <person name="Koehrer K."/>
            <person name="Ottenwaelder B."/>
            <person name="Poustka A."/>
            <person name="Wiemann S."/>
            <person name="Schupp I."/>
        </authorList>
    </citation>
    <scope>NUCLEOTIDE SEQUENCE [LARGE SCALE MRNA] (ISOFORM 4)</scope>
    <source>
        <tissue>Testis</tissue>
    </source>
</reference>
<reference key="6">
    <citation type="journal article" date="2006" name="Nature">
        <title>The DNA sequence and biological annotation of human chromosome 1.</title>
        <authorList>
            <person name="Gregory S.G."/>
            <person name="Barlow K.F."/>
            <person name="McLay K.E."/>
            <person name="Kaul R."/>
            <person name="Swarbreck D."/>
            <person name="Dunham A."/>
            <person name="Scott C.E."/>
            <person name="Howe K.L."/>
            <person name="Woodfine K."/>
            <person name="Spencer C.C.A."/>
            <person name="Jones M.C."/>
            <person name="Gillson C."/>
            <person name="Searle S."/>
            <person name="Zhou Y."/>
            <person name="Kokocinski F."/>
            <person name="McDonald L."/>
            <person name="Evans R."/>
            <person name="Phillips K."/>
            <person name="Atkinson A."/>
            <person name="Cooper R."/>
            <person name="Jones C."/>
            <person name="Hall R.E."/>
            <person name="Andrews T.D."/>
            <person name="Lloyd C."/>
            <person name="Ainscough R."/>
            <person name="Almeida J.P."/>
            <person name="Ambrose K.D."/>
            <person name="Anderson F."/>
            <person name="Andrew R.W."/>
            <person name="Ashwell R.I.S."/>
            <person name="Aubin K."/>
            <person name="Babbage A.K."/>
            <person name="Bagguley C.L."/>
            <person name="Bailey J."/>
            <person name="Beasley H."/>
            <person name="Bethel G."/>
            <person name="Bird C.P."/>
            <person name="Bray-Allen S."/>
            <person name="Brown J.Y."/>
            <person name="Brown A.J."/>
            <person name="Buckley D."/>
            <person name="Burton J."/>
            <person name="Bye J."/>
            <person name="Carder C."/>
            <person name="Chapman J.C."/>
            <person name="Clark S.Y."/>
            <person name="Clarke G."/>
            <person name="Clee C."/>
            <person name="Cobley V."/>
            <person name="Collier R.E."/>
            <person name="Corby N."/>
            <person name="Coville G.J."/>
            <person name="Davies J."/>
            <person name="Deadman R."/>
            <person name="Dunn M."/>
            <person name="Earthrowl M."/>
            <person name="Ellington A.G."/>
            <person name="Errington H."/>
            <person name="Frankish A."/>
            <person name="Frankland J."/>
            <person name="French L."/>
            <person name="Garner P."/>
            <person name="Garnett J."/>
            <person name="Gay L."/>
            <person name="Ghori M.R.J."/>
            <person name="Gibson R."/>
            <person name="Gilby L.M."/>
            <person name="Gillett W."/>
            <person name="Glithero R.J."/>
            <person name="Grafham D.V."/>
            <person name="Griffiths C."/>
            <person name="Griffiths-Jones S."/>
            <person name="Grocock R."/>
            <person name="Hammond S."/>
            <person name="Harrison E.S.I."/>
            <person name="Hart E."/>
            <person name="Haugen E."/>
            <person name="Heath P.D."/>
            <person name="Holmes S."/>
            <person name="Holt K."/>
            <person name="Howden P.J."/>
            <person name="Hunt A.R."/>
            <person name="Hunt S.E."/>
            <person name="Hunter G."/>
            <person name="Isherwood J."/>
            <person name="James R."/>
            <person name="Johnson C."/>
            <person name="Johnson D."/>
            <person name="Joy A."/>
            <person name="Kay M."/>
            <person name="Kershaw J.K."/>
            <person name="Kibukawa M."/>
            <person name="Kimberley A.M."/>
            <person name="King A."/>
            <person name="Knights A.J."/>
            <person name="Lad H."/>
            <person name="Laird G."/>
            <person name="Lawlor S."/>
            <person name="Leongamornlert D.A."/>
            <person name="Lloyd D.M."/>
            <person name="Loveland J."/>
            <person name="Lovell J."/>
            <person name="Lush M.J."/>
            <person name="Lyne R."/>
            <person name="Martin S."/>
            <person name="Mashreghi-Mohammadi M."/>
            <person name="Matthews L."/>
            <person name="Matthews N.S.W."/>
            <person name="McLaren S."/>
            <person name="Milne S."/>
            <person name="Mistry S."/>
            <person name="Moore M.J.F."/>
            <person name="Nickerson T."/>
            <person name="O'Dell C.N."/>
            <person name="Oliver K."/>
            <person name="Palmeiri A."/>
            <person name="Palmer S.A."/>
            <person name="Parker A."/>
            <person name="Patel D."/>
            <person name="Pearce A.V."/>
            <person name="Peck A.I."/>
            <person name="Pelan S."/>
            <person name="Phelps K."/>
            <person name="Phillimore B.J."/>
            <person name="Plumb R."/>
            <person name="Rajan J."/>
            <person name="Raymond C."/>
            <person name="Rouse G."/>
            <person name="Saenphimmachak C."/>
            <person name="Sehra H.K."/>
            <person name="Sheridan E."/>
            <person name="Shownkeen R."/>
            <person name="Sims S."/>
            <person name="Skuce C.D."/>
            <person name="Smith M."/>
            <person name="Steward C."/>
            <person name="Subramanian S."/>
            <person name="Sycamore N."/>
            <person name="Tracey A."/>
            <person name="Tromans A."/>
            <person name="Van Helmond Z."/>
            <person name="Wall M."/>
            <person name="Wallis J.M."/>
            <person name="White S."/>
            <person name="Whitehead S.L."/>
            <person name="Wilkinson J.E."/>
            <person name="Willey D.L."/>
            <person name="Williams H."/>
            <person name="Wilming L."/>
            <person name="Wray P.W."/>
            <person name="Wu Z."/>
            <person name="Coulson A."/>
            <person name="Vaudin M."/>
            <person name="Sulston J.E."/>
            <person name="Durbin R.M."/>
            <person name="Hubbard T."/>
            <person name="Wooster R."/>
            <person name="Dunham I."/>
            <person name="Carter N.P."/>
            <person name="McVean G."/>
            <person name="Ross M.T."/>
            <person name="Harrow J."/>
            <person name="Olson M.V."/>
            <person name="Beck S."/>
            <person name="Rogers J."/>
            <person name="Bentley D.R."/>
        </authorList>
    </citation>
    <scope>NUCLEOTIDE SEQUENCE [LARGE SCALE GENOMIC DNA]</scope>
</reference>
<reference key="7">
    <citation type="journal article" date="2004" name="Genome Res.">
        <title>The status, quality, and expansion of the NIH full-length cDNA project: the Mammalian Gene Collection (MGC).</title>
        <authorList>
            <consortium name="The MGC Project Team"/>
        </authorList>
    </citation>
    <scope>NUCLEOTIDE SEQUENCE [LARGE SCALE MRNA] (ISOFORM 3)</scope>
    <scope>VARIANTS CYS-114; GLU-444 AND VAL-459</scope>
    <source>
        <tissue>Testis</tissue>
    </source>
</reference>
<gene>
    <name evidence="12" type="primary">NBPF3</name>
    <name type="ORF">L7</name>
</gene>
<organism>
    <name type="scientific">Homo sapiens</name>
    <name type="common">Human</name>
    <dbReference type="NCBI Taxonomy" id="9606"/>
    <lineage>
        <taxon>Eukaryota</taxon>
        <taxon>Metazoa</taxon>
        <taxon>Chordata</taxon>
        <taxon>Craniata</taxon>
        <taxon>Vertebrata</taxon>
        <taxon>Euteleostomi</taxon>
        <taxon>Mammalia</taxon>
        <taxon>Eutheria</taxon>
        <taxon>Euarchontoglires</taxon>
        <taxon>Primates</taxon>
        <taxon>Haplorrhini</taxon>
        <taxon>Catarrhini</taxon>
        <taxon>Hominidae</taxon>
        <taxon>Homo</taxon>
    </lineage>
</organism>
<name>NBPF3_HUMAN</name>
<evidence type="ECO:0000255" key="1"/>
<evidence type="ECO:0000255" key="2">
    <source>
        <dbReference type="PROSITE-ProRule" id="PRU00647"/>
    </source>
</evidence>
<evidence type="ECO:0000256" key="3">
    <source>
        <dbReference type="SAM" id="MobiDB-lite"/>
    </source>
</evidence>
<evidence type="ECO:0000269" key="4">
    <source>
    </source>
</evidence>
<evidence type="ECO:0000269" key="5">
    <source>
    </source>
</evidence>
<evidence type="ECO:0000269" key="6">
    <source>
    </source>
</evidence>
<evidence type="ECO:0000303" key="7">
    <source>
    </source>
</evidence>
<evidence type="ECO:0000303" key="8">
    <source>
    </source>
</evidence>
<evidence type="ECO:0000303" key="9">
    <source>
    </source>
</evidence>
<evidence type="ECO:0000303" key="10">
    <source>
    </source>
</evidence>
<evidence type="ECO:0000305" key="11"/>
<evidence type="ECO:0000312" key="12">
    <source>
        <dbReference type="HGNC" id="HGNC:25076"/>
    </source>
</evidence>
<feature type="chain" id="PRO_0000288038" description="NBPF family member NBPF3">
    <location>
        <begin position="1"/>
        <end position="633"/>
    </location>
</feature>
<feature type="domain" description="Olduvai 1" evidence="2">
    <location>
        <begin position="221"/>
        <end position="313"/>
    </location>
</feature>
<feature type="domain" description="Olduvai 2" evidence="2">
    <location>
        <begin position="314"/>
        <end position="402"/>
    </location>
</feature>
<feature type="domain" description="Olduvai 3" evidence="2">
    <location>
        <begin position="405"/>
        <end position="460"/>
    </location>
</feature>
<feature type="domain" description="Olduvai 4" evidence="2">
    <location>
        <begin position="461"/>
        <end position="552"/>
    </location>
</feature>
<feature type="domain" description="Olduvai 5" evidence="2">
    <location>
        <begin position="555"/>
        <end position="633"/>
    </location>
</feature>
<feature type="region of interest" description="Disordered" evidence="3">
    <location>
        <begin position="15"/>
        <end position="52"/>
    </location>
</feature>
<feature type="region of interest" description="Disordered" evidence="3">
    <location>
        <begin position="316"/>
        <end position="370"/>
    </location>
</feature>
<feature type="region of interest" description="Disordered" evidence="3">
    <location>
        <begin position="463"/>
        <end position="484"/>
    </location>
</feature>
<feature type="coiled-coil region" evidence="1">
    <location>
        <begin position="127"/>
        <end position="186"/>
    </location>
</feature>
<feature type="compositionally biased region" description="Basic and acidic residues" evidence="3">
    <location>
        <begin position="316"/>
        <end position="326"/>
    </location>
</feature>
<feature type="compositionally biased region" description="Acidic residues" evidence="3">
    <location>
        <begin position="335"/>
        <end position="350"/>
    </location>
</feature>
<feature type="splice variant" id="VSP_025625" description="In isoform 4." evidence="10">
    <location>
        <begin position="1"/>
        <end position="358"/>
    </location>
</feature>
<feature type="splice variant" id="VSP_025626" description="In isoform 2." evidence="9">
    <location>
        <begin position="1"/>
        <end position="56"/>
    </location>
</feature>
<feature type="splice variant" id="VSP_044705" description="In isoform 5." evidence="7">
    <location>
        <begin position="45"/>
        <end position="114"/>
    </location>
</feature>
<feature type="splice variant" id="VSP_025627" description="In isoform 3." evidence="8">
    <original>R</original>
    <variation>RSSGRFCCLISVGYIFCHPCPAWLIR</variation>
    <location>
        <position position="331"/>
    </location>
</feature>
<feature type="splice variant" id="VSP_025628" description="In isoform 3." evidence="8">
    <location>
        <begin position="350"/>
        <end position="386"/>
    </location>
</feature>
<feature type="sequence variant" id="VAR_032374" description="In dbSNP:rs1827293." evidence="5">
    <original>Y</original>
    <variation>C</variation>
    <location>
        <position position="114"/>
    </location>
</feature>
<feature type="sequence variant" id="VAR_053909" description="In dbSNP:rs16825377.">
    <original>R</original>
    <variation>Q</variation>
    <location>
        <position position="198"/>
    </location>
</feature>
<feature type="sequence variant" id="VAR_047965" description="In dbSNP:rs12043777." evidence="4 5">
    <original>D</original>
    <variation>E</variation>
    <location>
        <position position="444"/>
    </location>
</feature>
<feature type="sequence variant" id="VAR_032375" description="In dbSNP:rs12034222." evidence="4 5">
    <original>L</original>
    <variation>V</variation>
    <location>
        <position position="459"/>
    </location>
</feature>
<feature type="sequence conflict" description="In Ref. 2; AAX85103." evidence="11" ref="2">
    <original>E</original>
    <variation>Q</variation>
    <location>
        <position position="70"/>
    </location>
</feature>
<feature type="sequence conflict" description="In Ref. 2; AAX85103." evidence="11" ref="2">
    <original>K</original>
    <variation>T</variation>
    <location>
        <position position="78"/>
    </location>
</feature>
<feature type="sequence conflict" description="In Ref. 7; AAH24011." evidence="11" ref="7">
    <original>C</original>
    <variation>Y</variation>
    <location>
        <position position="263"/>
    </location>
</feature>
<feature type="sequence conflict" description="In Ref. 4; BAG61704 and 7; AAH24011." evidence="11" ref="4 7">
    <original>FE</original>
    <variation>CG</variation>
    <location>
        <begin position="429"/>
        <end position="430"/>
    </location>
</feature>
<feature type="sequence conflict" description="In Ref. 4; BAG61704, 5; CAD38998 and 7; AAH24011." evidence="11" ref="4 5 7">
    <original>K</original>
    <variation>N</variation>
    <location>
        <position position="548"/>
    </location>
</feature>
<feature type="sequence conflict" description="In Ref. 5; CAD38998." evidence="11" ref="5">
    <original>P</original>
    <variation>A</variation>
    <location>
        <position position="564"/>
    </location>
</feature>
<sequence>MPLTPTVQGFQWTLRGPDVETSPFGAPRAASHGVGRHQELRDPTVPGPTSSATNVSMVVSAGPWSGEKAEMNILEINKKSRPQLAENKQQFRNLKQKCLVTQVAYFLANRQNNYDYEDCKDLIKSMLRDERLLTEEKLAEELGQAEELRQYKVLVHSQERELTQLREKLQEGRDASRSLNQHLQALLTPDEPDNSQGRDLREQLAEGCRLAQHLVQKLSPENDDDEDEDVKVEEAEKVQELYAPREVQKAEEKEVPEDSLEECAITCSNSHHPCESNQPYGNTRITFEEDQVDSTLIDSSSHDEWLDAVCIIPENESDHEQEEEKGPVSPRNLQESEEEEAPQESWDEGDWTLSIPPDMSASYQSDRSTFHSVEEQQVGLALDIGRHWCDQVKKEDQEATSPRLSRELLDEKEPEVLQDSLDRFYSTPFEYLELPDLCQPYRSDFYSLQEQHLGLALDLDRMKKDQEEEEDQGPPCPRLSRELPEVVEPEDLQDSLDRWYSTPFSYPELPDSCQPYGSCFYSLEEEHVGFSLDVDEIEKYQEGEEDQKPPCPRLNEVLMEAEEPEVLQDSLDRCYSTTSTYFQLHASFQQYRSAFYSFEEQDVSLALDVDNRFFTLTVIRHHLAFQMGVIFPH</sequence>